<proteinExistence type="inferred from homology"/>
<feature type="chain" id="PRO_0000224842" description="Holliday junction branch migration complex subunit RuvA">
    <location>
        <begin position="1"/>
        <end position="201"/>
    </location>
</feature>
<feature type="region of interest" description="Domain I" evidence="1">
    <location>
        <begin position="1"/>
        <end position="63"/>
    </location>
</feature>
<feature type="region of interest" description="Domain II" evidence="1">
    <location>
        <begin position="64"/>
        <end position="142"/>
    </location>
</feature>
<feature type="region of interest" description="Flexible linker" evidence="1">
    <location>
        <begin position="143"/>
        <end position="153"/>
    </location>
</feature>
<feature type="region of interest" description="Domain III" evidence="1">
    <location>
        <begin position="153"/>
        <end position="201"/>
    </location>
</feature>
<reference key="1">
    <citation type="journal article" date="2004" name="Proc. Natl. Acad. Sci. U.S.A.">
        <title>Genomic analysis of Bacteroides fragilis reveals extensive DNA inversions regulating cell surface adaptation.</title>
        <authorList>
            <person name="Kuwahara T."/>
            <person name="Yamashita A."/>
            <person name="Hirakawa H."/>
            <person name="Nakayama H."/>
            <person name="Toh H."/>
            <person name="Okada N."/>
            <person name="Kuhara S."/>
            <person name="Hattori M."/>
            <person name="Hayashi T."/>
            <person name="Ohnishi Y."/>
        </authorList>
    </citation>
    <scope>NUCLEOTIDE SEQUENCE [LARGE SCALE GENOMIC DNA]</scope>
    <source>
        <strain>YCH46</strain>
    </source>
</reference>
<dbReference type="EMBL" id="AP006841">
    <property type="protein sequence ID" value="BAD50432.1"/>
    <property type="molecule type" value="Genomic_DNA"/>
</dbReference>
<dbReference type="RefSeq" id="WP_005790555.1">
    <property type="nucleotide sequence ID" value="NZ_UYXF01000029.1"/>
</dbReference>
<dbReference type="RefSeq" id="YP_100966.1">
    <property type="nucleotide sequence ID" value="NC_006347.1"/>
</dbReference>
<dbReference type="SMR" id="Q64PZ9"/>
<dbReference type="STRING" id="295405.BF3689"/>
<dbReference type="GeneID" id="60368711"/>
<dbReference type="KEGG" id="bfr:BF3689"/>
<dbReference type="PATRIC" id="fig|295405.11.peg.3538"/>
<dbReference type="HOGENOM" id="CLU_087936_3_0_10"/>
<dbReference type="OrthoDB" id="5293449at2"/>
<dbReference type="Proteomes" id="UP000002197">
    <property type="component" value="Chromosome"/>
</dbReference>
<dbReference type="GO" id="GO:0005737">
    <property type="term" value="C:cytoplasm"/>
    <property type="evidence" value="ECO:0007669"/>
    <property type="project" value="UniProtKB-SubCell"/>
</dbReference>
<dbReference type="GO" id="GO:0009379">
    <property type="term" value="C:Holliday junction helicase complex"/>
    <property type="evidence" value="ECO:0007669"/>
    <property type="project" value="InterPro"/>
</dbReference>
<dbReference type="GO" id="GO:0048476">
    <property type="term" value="C:Holliday junction resolvase complex"/>
    <property type="evidence" value="ECO:0007669"/>
    <property type="project" value="UniProtKB-UniRule"/>
</dbReference>
<dbReference type="GO" id="GO:0005524">
    <property type="term" value="F:ATP binding"/>
    <property type="evidence" value="ECO:0007669"/>
    <property type="project" value="InterPro"/>
</dbReference>
<dbReference type="GO" id="GO:0000400">
    <property type="term" value="F:four-way junction DNA binding"/>
    <property type="evidence" value="ECO:0007669"/>
    <property type="project" value="UniProtKB-UniRule"/>
</dbReference>
<dbReference type="GO" id="GO:0009378">
    <property type="term" value="F:four-way junction helicase activity"/>
    <property type="evidence" value="ECO:0007669"/>
    <property type="project" value="InterPro"/>
</dbReference>
<dbReference type="GO" id="GO:0006310">
    <property type="term" value="P:DNA recombination"/>
    <property type="evidence" value="ECO:0007669"/>
    <property type="project" value="UniProtKB-UniRule"/>
</dbReference>
<dbReference type="GO" id="GO:0006281">
    <property type="term" value="P:DNA repair"/>
    <property type="evidence" value="ECO:0007669"/>
    <property type="project" value="UniProtKB-UniRule"/>
</dbReference>
<dbReference type="CDD" id="cd14332">
    <property type="entry name" value="UBA_RuvA_C"/>
    <property type="match status" value="1"/>
</dbReference>
<dbReference type="Gene3D" id="1.10.150.20">
    <property type="entry name" value="5' to 3' exonuclease, C-terminal subdomain"/>
    <property type="match status" value="1"/>
</dbReference>
<dbReference type="Gene3D" id="1.10.8.10">
    <property type="entry name" value="DNA helicase RuvA subunit, C-terminal domain"/>
    <property type="match status" value="1"/>
</dbReference>
<dbReference type="Gene3D" id="2.40.50.140">
    <property type="entry name" value="Nucleic acid-binding proteins"/>
    <property type="match status" value="1"/>
</dbReference>
<dbReference type="HAMAP" id="MF_00031">
    <property type="entry name" value="DNA_HJ_migration_RuvA"/>
    <property type="match status" value="1"/>
</dbReference>
<dbReference type="InterPro" id="IPR013849">
    <property type="entry name" value="DNA_helicase_Holl-junc_RuvA_I"/>
</dbReference>
<dbReference type="InterPro" id="IPR003583">
    <property type="entry name" value="Hlx-hairpin-Hlx_DNA-bd_motif"/>
</dbReference>
<dbReference type="InterPro" id="IPR012340">
    <property type="entry name" value="NA-bd_OB-fold"/>
</dbReference>
<dbReference type="InterPro" id="IPR000085">
    <property type="entry name" value="RuvA"/>
</dbReference>
<dbReference type="InterPro" id="IPR010994">
    <property type="entry name" value="RuvA_2-like"/>
</dbReference>
<dbReference type="InterPro" id="IPR011114">
    <property type="entry name" value="RuvA_C"/>
</dbReference>
<dbReference type="InterPro" id="IPR036267">
    <property type="entry name" value="RuvA_C_sf"/>
</dbReference>
<dbReference type="NCBIfam" id="TIGR00084">
    <property type="entry name" value="ruvA"/>
    <property type="match status" value="1"/>
</dbReference>
<dbReference type="Pfam" id="PF14520">
    <property type="entry name" value="HHH_5"/>
    <property type="match status" value="1"/>
</dbReference>
<dbReference type="Pfam" id="PF07499">
    <property type="entry name" value="RuvA_C"/>
    <property type="match status" value="1"/>
</dbReference>
<dbReference type="Pfam" id="PF01330">
    <property type="entry name" value="RuvA_N"/>
    <property type="match status" value="1"/>
</dbReference>
<dbReference type="SMART" id="SM00278">
    <property type="entry name" value="HhH1"/>
    <property type="match status" value="2"/>
</dbReference>
<dbReference type="SUPFAM" id="SSF46929">
    <property type="entry name" value="DNA helicase RuvA subunit, C-terminal domain"/>
    <property type="match status" value="1"/>
</dbReference>
<dbReference type="SUPFAM" id="SSF50249">
    <property type="entry name" value="Nucleic acid-binding proteins"/>
    <property type="match status" value="1"/>
</dbReference>
<dbReference type="SUPFAM" id="SSF47781">
    <property type="entry name" value="RuvA domain 2-like"/>
    <property type="match status" value="1"/>
</dbReference>
<organism>
    <name type="scientific">Bacteroides fragilis (strain YCH46)</name>
    <dbReference type="NCBI Taxonomy" id="295405"/>
    <lineage>
        <taxon>Bacteria</taxon>
        <taxon>Pseudomonadati</taxon>
        <taxon>Bacteroidota</taxon>
        <taxon>Bacteroidia</taxon>
        <taxon>Bacteroidales</taxon>
        <taxon>Bacteroidaceae</taxon>
        <taxon>Bacteroides</taxon>
    </lineage>
</organism>
<protein>
    <recommendedName>
        <fullName evidence="1">Holliday junction branch migration complex subunit RuvA</fullName>
    </recommendedName>
</protein>
<keyword id="KW-0963">Cytoplasm</keyword>
<keyword id="KW-0227">DNA damage</keyword>
<keyword id="KW-0233">DNA recombination</keyword>
<keyword id="KW-0234">DNA repair</keyword>
<keyword id="KW-0238">DNA-binding</keyword>
<name>RUVA_BACFR</name>
<evidence type="ECO:0000255" key="1">
    <source>
        <dbReference type="HAMAP-Rule" id="MF_00031"/>
    </source>
</evidence>
<accession>Q64PZ9</accession>
<sequence length="201" mass="21201">MIEYIKGEIAELSPATAVIDCNGLGYAVNISLNTYSAIQGKSSCKLYIYEAIREDAYVLYGFADKQERELFLLLISVSGIGGNTARMILSALSPAELVNVISTENANMLKTVKGIGLKTAQRVIVDLKDKIKTGAMAATAVGGAAGALLPAMNAEVQEEAIAALTMLGFAAAPSQKAVLAILKEEPDAPVEKVIKLALKRL</sequence>
<comment type="function">
    <text evidence="1">The RuvA-RuvB-RuvC complex processes Holliday junction (HJ) DNA during genetic recombination and DNA repair, while the RuvA-RuvB complex plays an important role in the rescue of blocked DNA replication forks via replication fork reversal (RFR). RuvA specifically binds to HJ cruciform DNA, conferring on it an open structure. The RuvB hexamer acts as an ATP-dependent pump, pulling dsDNA into and through the RuvAB complex. HJ branch migration allows RuvC to scan DNA until it finds its consensus sequence, where it cleaves and resolves the cruciform DNA.</text>
</comment>
<comment type="subunit">
    <text evidence="1">Homotetramer. Forms an RuvA(8)-RuvB(12)-Holliday junction (HJ) complex. HJ DNA is sandwiched between 2 RuvA tetramers; dsDNA enters through RuvA and exits via RuvB. An RuvB hexamer assembles on each DNA strand where it exits the tetramer. Each RuvB hexamer is contacted by two RuvA subunits (via domain III) on 2 adjacent RuvB subunits; this complex drives branch migration. In the full resolvosome a probable DNA-RuvA(4)-RuvB(12)-RuvC(2) complex forms which resolves the HJ.</text>
</comment>
<comment type="subcellular location">
    <subcellularLocation>
        <location evidence="1">Cytoplasm</location>
    </subcellularLocation>
</comment>
<comment type="domain">
    <text evidence="1">Has three domains with a flexible linker between the domains II and III and assumes an 'L' shape. Domain III is highly mobile and contacts RuvB.</text>
</comment>
<comment type="similarity">
    <text evidence="1">Belongs to the RuvA family.</text>
</comment>
<gene>
    <name evidence="1" type="primary">ruvA</name>
    <name type="ordered locus">BF3689</name>
</gene>